<feature type="chain" id="PRO_0000231272" description="UDP-N-acetylglucosamine 1-carboxyvinyltransferase 2">
    <location>
        <begin position="1"/>
        <end position="423"/>
    </location>
</feature>
<feature type="active site" description="Proton donor" evidence="1">
    <location>
        <position position="120"/>
    </location>
</feature>
<feature type="binding site" evidence="1">
    <location>
        <begin position="23"/>
        <end position="24"/>
    </location>
    <ligand>
        <name>phosphoenolpyruvate</name>
        <dbReference type="ChEBI" id="CHEBI:58702"/>
    </ligand>
</feature>
<feature type="binding site" evidence="1">
    <location>
        <position position="96"/>
    </location>
    <ligand>
        <name>UDP-N-acetyl-alpha-D-glucosamine</name>
        <dbReference type="ChEBI" id="CHEBI:57705"/>
    </ligand>
</feature>
<feature type="binding site" evidence="1">
    <location>
        <begin position="125"/>
        <end position="129"/>
    </location>
    <ligand>
        <name>UDP-N-acetyl-alpha-D-glucosamine</name>
        <dbReference type="ChEBI" id="CHEBI:57705"/>
    </ligand>
</feature>
<feature type="binding site" evidence="1">
    <location>
        <position position="309"/>
    </location>
    <ligand>
        <name>UDP-N-acetyl-alpha-D-glucosamine</name>
        <dbReference type="ChEBI" id="CHEBI:57705"/>
    </ligand>
</feature>
<feature type="binding site" evidence="1">
    <location>
        <position position="331"/>
    </location>
    <ligand>
        <name>UDP-N-acetyl-alpha-D-glucosamine</name>
        <dbReference type="ChEBI" id="CHEBI:57705"/>
    </ligand>
</feature>
<feature type="modified residue" description="2-(S-cysteinyl)pyruvic acid O-phosphothioketal" evidence="1">
    <location>
        <position position="120"/>
    </location>
</feature>
<reference key="1">
    <citation type="journal article" date="2005" name="Proc. Natl. Acad. Sci. U.S.A.">
        <title>Genome analysis of multiple pathogenic isolates of Streptococcus agalactiae: implications for the microbial 'pan-genome'.</title>
        <authorList>
            <person name="Tettelin H."/>
            <person name="Masignani V."/>
            <person name="Cieslewicz M.J."/>
            <person name="Donati C."/>
            <person name="Medini D."/>
            <person name="Ward N.L."/>
            <person name="Angiuoli S.V."/>
            <person name="Crabtree J."/>
            <person name="Jones A.L."/>
            <person name="Durkin A.S."/>
            <person name="DeBoy R.T."/>
            <person name="Davidsen T.M."/>
            <person name="Mora M."/>
            <person name="Scarselli M."/>
            <person name="Margarit y Ros I."/>
            <person name="Peterson J.D."/>
            <person name="Hauser C.R."/>
            <person name="Sundaram J.P."/>
            <person name="Nelson W.C."/>
            <person name="Madupu R."/>
            <person name="Brinkac L.M."/>
            <person name="Dodson R.J."/>
            <person name="Rosovitz M.J."/>
            <person name="Sullivan S.A."/>
            <person name="Daugherty S.C."/>
            <person name="Haft D.H."/>
            <person name="Selengut J."/>
            <person name="Gwinn M.L."/>
            <person name="Zhou L."/>
            <person name="Zafar N."/>
            <person name="Khouri H."/>
            <person name="Radune D."/>
            <person name="Dimitrov G."/>
            <person name="Watkins K."/>
            <person name="O'Connor K.J."/>
            <person name="Smith S."/>
            <person name="Utterback T.R."/>
            <person name="White O."/>
            <person name="Rubens C.E."/>
            <person name="Grandi G."/>
            <person name="Madoff L.C."/>
            <person name="Kasper D.L."/>
            <person name="Telford J.L."/>
            <person name="Wessels M.R."/>
            <person name="Rappuoli R."/>
            <person name="Fraser C.M."/>
        </authorList>
    </citation>
    <scope>NUCLEOTIDE SEQUENCE [LARGE SCALE GENOMIC DNA]</scope>
    <source>
        <strain>ATCC 27591 / A909 / CDC SS700</strain>
    </source>
</reference>
<organism>
    <name type="scientific">Streptococcus agalactiae serotype Ia (strain ATCC 27591 / A909 / CDC SS700)</name>
    <dbReference type="NCBI Taxonomy" id="205921"/>
    <lineage>
        <taxon>Bacteria</taxon>
        <taxon>Bacillati</taxon>
        <taxon>Bacillota</taxon>
        <taxon>Bacilli</taxon>
        <taxon>Lactobacillales</taxon>
        <taxon>Streptococcaceae</taxon>
        <taxon>Streptococcus</taxon>
    </lineage>
</organism>
<gene>
    <name evidence="1" type="primary">murA2</name>
    <name type="ordered locus">SAK_0989</name>
</gene>
<name>MURA2_STRA1</name>
<proteinExistence type="inferred from homology"/>
<accession>Q3K1J2</accession>
<sequence length="423" mass="45242">MDKIIVEGGQTQLQGQVVIEGAKNAVLPLLAATILPSQGKTLLTNVPILSDVFTMNNVVRGLDIQVDFNCDKKEILVDASGDILDVAPYEFVSQMRASIVVLGPILARNGHAKVSMPGGCTIGSRPIDLHLKGLEAMGATITQNGGDITAQAEKLKGANIYMDFPSVGATQNLMMAATLASGTTTIENAAREPEIVDLAQLLNKMGAKVKGAGTETLTIIGVDALHGTEHDVVQDRIEAGTFMVAAAMTSGNVLVKDAIWEHNRPLISKLMEMGVEVSEEEDGIRVKADTKKLKPVTVKTLPHPGFPTDMQAQFTALMAVVNGESTMIETVFENRFQHLEEMRRMGLQTEILRDTAMIHGGRALQGAPVMSTDLRASAALILAGMVAQGQTVVGQLTHLDRGYYQFHEKLAALGANIKRVSEA</sequence>
<keyword id="KW-0131">Cell cycle</keyword>
<keyword id="KW-0132">Cell division</keyword>
<keyword id="KW-0133">Cell shape</keyword>
<keyword id="KW-0961">Cell wall biogenesis/degradation</keyword>
<keyword id="KW-0963">Cytoplasm</keyword>
<keyword id="KW-0573">Peptidoglycan synthesis</keyword>
<keyword id="KW-0670">Pyruvate</keyword>
<keyword id="KW-0808">Transferase</keyword>
<evidence type="ECO:0000255" key="1">
    <source>
        <dbReference type="HAMAP-Rule" id="MF_00111"/>
    </source>
</evidence>
<comment type="function">
    <text evidence="1">Cell wall formation. Adds enolpyruvyl to UDP-N-acetylglucosamine.</text>
</comment>
<comment type="catalytic activity">
    <reaction evidence="1">
        <text>phosphoenolpyruvate + UDP-N-acetyl-alpha-D-glucosamine = UDP-N-acetyl-3-O-(1-carboxyvinyl)-alpha-D-glucosamine + phosphate</text>
        <dbReference type="Rhea" id="RHEA:18681"/>
        <dbReference type="ChEBI" id="CHEBI:43474"/>
        <dbReference type="ChEBI" id="CHEBI:57705"/>
        <dbReference type="ChEBI" id="CHEBI:58702"/>
        <dbReference type="ChEBI" id="CHEBI:68483"/>
        <dbReference type="EC" id="2.5.1.7"/>
    </reaction>
</comment>
<comment type="pathway">
    <text evidence="1">Cell wall biogenesis; peptidoglycan biosynthesis.</text>
</comment>
<comment type="subcellular location">
    <subcellularLocation>
        <location evidence="1">Cytoplasm</location>
    </subcellularLocation>
</comment>
<comment type="similarity">
    <text evidence="1">Belongs to the EPSP synthase family. MurA subfamily.</text>
</comment>
<dbReference type="EC" id="2.5.1.7" evidence="1"/>
<dbReference type="EMBL" id="CP000114">
    <property type="protein sequence ID" value="ABA45048.1"/>
    <property type="molecule type" value="Genomic_DNA"/>
</dbReference>
<dbReference type="SMR" id="Q3K1J2"/>
<dbReference type="KEGG" id="sak:SAK_0989"/>
<dbReference type="HOGENOM" id="CLU_027387_0_0_9"/>
<dbReference type="UniPathway" id="UPA00219"/>
<dbReference type="GO" id="GO:0005737">
    <property type="term" value="C:cytoplasm"/>
    <property type="evidence" value="ECO:0007669"/>
    <property type="project" value="UniProtKB-SubCell"/>
</dbReference>
<dbReference type="GO" id="GO:0008760">
    <property type="term" value="F:UDP-N-acetylglucosamine 1-carboxyvinyltransferase activity"/>
    <property type="evidence" value="ECO:0007669"/>
    <property type="project" value="UniProtKB-UniRule"/>
</dbReference>
<dbReference type="GO" id="GO:0051301">
    <property type="term" value="P:cell division"/>
    <property type="evidence" value="ECO:0007669"/>
    <property type="project" value="UniProtKB-KW"/>
</dbReference>
<dbReference type="GO" id="GO:0071555">
    <property type="term" value="P:cell wall organization"/>
    <property type="evidence" value="ECO:0007669"/>
    <property type="project" value="UniProtKB-KW"/>
</dbReference>
<dbReference type="GO" id="GO:0009252">
    <property type="term" value="P:peptidoglycan biosynthetic process"/>
    <property type="evidence" value="ECO:0007669"/>
    <property type="project" value="UniProtKB-UniRule"/>
</dbReference>
<dbReference type="GO" id="GO:0008360">
    <property type="term" value="P:regulation of cell shape"/>
    <property type="evidence" value="ECO:0007669"/>
    <property type="project" value="UniProtKB-KW"/>
</dbReference>
<dbReference type="GO" id="GO:0019277">
    <property type="term" value="P:UDP-N-acetylgalactosamine biosynthetic process"/>
    <property type="evidence" value="ECO:0007669"/>
    <property type="project" value="InterPro"/>
</dbReference>
<dbReference type="CDD" id="cd01555">
    <property type="entry name" value="UdpNAET"/>
    <property type="match status" value="1"/>
</dbReference>
<dbReference type="FunFam" id="3.65.10.10:FF:000001">
    <property type="entry name" value="UDP-N-acetylglucosamine 1-carboxyvinyltransferase"/>
    <property type="match status" value="1"/>
</dbReference>
<dbReference type="Gene3D" id="3.65.10.10">
    <property type="entry name" value="Enolpyruvate transferase domain"/>
    <property type="match status" value="2"/>
</dbReference>
<dbReference type="HAMAP" id="MF_00111">
    <property type="entry name" value="MurA"/>
    <property type="match status" value="1"/>
</dbReference>
<dbReference type="InterPro" id="IPR001986">
    <property type="entry name" value="Enolpyruvate_Tfrase_dom"/>
</dbReference>
<dbReference type="InterPro" id="IPR036968">
    <property type="entry name" value="Enolpyruvate_Tfrase_sf"/>
</dbReference>
<dbReference type="InterPro" id="IPR050068">
    <property type="entry name" value="MurA_subfamily"/>
</dbReference>
<dbReference type="InterPro" id="IPR013792">
    <property type="entry name" value="RNA3'P_cycl/enolpyr_Trfase_a/b"/>
</dbReference>
<dbReference type="InterPro" id="IPR005750">
    <property type="entry name" value="UDP_GlcNAc_COvinyl_MurA"/>
</dbReference>
<dbReference type="NCBIfam" id="TIGR01072">
    <property type="entry name" value="murA"/>
    <property type="match status" value="1"/>
</dbReference>
<dbReference type="NCBIfam" id="NF006873">
    <property type="entry name" value="PRK09369.1"/>
    <property type="match status" value="1"/>
</dbReference>
<dbReference type="PANTHER" id="PTHR43783">
    <property type="entry name" value="UDP-N-ACETYLGLUCOSAMINE 1-CARBOXYVINYLTRANSFERASE"/>
    <property type="match status" value="1"/>
</dbReference>
<dbReference type="PANTHER" id="PTHR43783:SF1">
    <property type="entry name" value="UDP-N-ACETYLGLUCOSAMINE 1-CARBOXYVINYLTRANSFERASE"/>
    <property type="match status" value="1"/>
</dbReference>
<dbReference type="Pfam" id="PF00275">
    <property type="entry name" value="EPSP_synthase"/>
    <property type="match status" value="1"/>
</dbReference>
<dbReference type="SUPFAM" id="SSF55205">
    <property type="entry name" value="EPT/RTPC-like"/>
    <property type="match status" value="1"/>
</dbReference>
<protein>
    <recommendedName>
        <fullName evidence="1">UDP-N-acetylglucosamine 1-carboxyvinyltransferase 2</fullName>
        <ecNumber evidence="1">2.5.1.7</ecNumber>
    </recommendedName>
    <alternativeName>
        <fullName evidence="1">Enoylpyruvate transferase 2</fullName>
    </alternativeName>
    <alternativeName>
        <fullName evidence="1">UDP-N-acetylglucosamine enolpyruvyl transferase 2</fullName>
        <shortName evidence="1">EPT 2</shortName>
    </alternativeName>
</protein>